<accession>A1AAV5</accession>
<comment type="function">
    <text evidence="1">Catalyzes the ATP-dependent 2-thiolation of cytidine in position 32 of tRNA, to form 2-thiocytidine (s(2)C32). The sulfur atoms are provided by the cysteine/cysteine desulfurase (IscS) system.</text>
</comment>
<comment type="catalytic activity">
    <reaction evidence="1">
        <text>cytidine(32) in tRNA + S-sulfanyl-L-cysteinyl-[cysteine desulfurase] + AH2 + ATP = 2-thiocytidine(32) in tRNA + L-cysteinyl-[cysteine desulfurase] + A + AMP + diphosphate + H(+)</text>
        <dbReference type="Rhea" id="RHEA:57048"/>
        <dbReference type="Rhea" id="RHEA-COMP:10288"/>
        <dbReference type="Rhea" id="RHEA-COMP:12157"/>
        <dbReference type="Rhea" id="RHEA-COMP:12158"/>
        <dbReference type="Rhea" id="RHEA-COMP:14821"/>
        <dbReference type="ChEBI" id="CHEBI:13193"/>
        <dbReference type="ChEBI" id="CHEBI:15378"/>
        <dbReference type="ChEBI" id="CHEBI:17499"/>
        <dbReference type="ChEBI" id="CHEBI:29950"/>
        <dbReference type="ChEBI" id="CHEBI:30616"/>
        <dbReference type="ChEBI" id="CHEBI:33019"/>
        <dbReference type="ChEBI" id="CHEBI:61963"/>
        <dbReference type="ChEBI" id="CHEBI:82748"/>
        <dbReference type="ChEBI" id="CHEBI:141453"/>
        <dbReference type="ChEBI" id="CHEBI:456215"/>
    </reaction>
    <physiologicalReaction direction="left-to-right" evidence="1">
        <dbReference type="Rhea" id="RHEA:57049"/>
    </physiologicalReaction>
</comment>
<comment type="cofactor">
    <cofactor evidence="1">
        <name>Mg(2+)</name>
        <dbReference type="ChEBI" id="CHEBI:18420"/>
    </cofactor>
</comment>
<comment type="cofactor">
    <cofactor evidence="1">
        <name>[4Fe-4S] cluster</name>
        <dbReference type="ChEBI" id="CHEBI:49883"/>
    </cofactor>
    <text evidence="1">Binds 1 [4Fe-4S] cluster per subunit. The cluster is chelated by three Cys residues, the fourth Fe has a free coordination site that may bind a sulfur atom transferred from the persulfide of IscS.</text>
</comment>
<comment type="pathway">
    <text evidence="1">tRNA modification.</text>
</comment>
<comment type="subunit">
    <text evidence="1">Homodimer.</text>
</comment>
<comment type="subcellular location">
    <subcellularLocation>
        <location evidence="1">Cytoplasm</location>
    </subcellularLocation>
</comment>
<comment type="miscellaneous">
    <text evidence="1">The thiolation reaction likely consists of two steps: a first activation step by ATP to form an adenylated intermediate of the target base of tRNA, and a second nucleophilic substitution step of the sulfur (S) atom supplied by the hydrosulfide attached to the Fe-S cluster.</text>
</comment>
<comment type="similarity">
    <text evidence="1">Belongs to the TtcA family.</text>
</comment>
<protein>
    <recommendedName>
        <fullName evidence="1">tRNA-cytidine(32) 2-sulfurtransferase</fullName>
        <ecNumber evidence="1">2.8.1.-</ecNumber>
    </recommendedName>
    <alternativeName>
        <fullName evidence="1">Two-thiocytidine biosynthesis protein A</fullName>
    </alternativeName>
    <alternativeName>
        <fullName evidence="1">tRNA 2-thiocytidine biosynthesis protein TtcA</fullName>
    </alternativeName>
</protein>
<proteinExistence type="inferred from homology"/>
<keyword id="KW-0004">4Fe-4S</keyword>
<keyword id="KW-0067">ATP-binding</keyword>
<keyword id="KW-0963">Cytoplasm</keyword>
<keyword id="KW-0408">Iron</keyword>
<keyword id="KW-0411">Iron-sulfur</keyword>
<keyword id="KW-0460">Magnesium</keyword>
<keyword id="KW-0479">Metal-binding</keyword>
<keyword id="KW-0547">Nucleotide-binding</keyword>
<keyword id="KW-1185">Reference proteome</keyword>
<keyword id="KW-0694">RNA-binding</keyword>
<keyword id="KW-0808">Transferase</keyword>
<keyword id="KW-0819">tRNA processing</keyword>
<keyword id="KW-0820">tRNA-binding</keyword>
<sequence length="311" mass="35490">MQENQKNTKKEIYNLNKLQKRLRRNVGEAIADFNMIEEGDRIMVCLSGGKDSYTMLEILRNLQQSAPINFSLVAVNLDQKQPGFPEHVLPEYLETLGVEYKIVEENTYGIVKEKIPEGKTTCSLCSRLRRGILYRTATELGATKIALGHHRDDILQTLFLNMFYGGKMKGMPPKLMSDDGKHIVIRPLAYCREKDIQRFADAKAFPIIPCNLCGSQPNLQRQVIADMLRDWDKRYPGRIETMFSAMQNVVPSHLCDTNLFDFKGITHGSEVVNGGDLAFDREEIPLQPSGWQPEEDENQLDELRLNVVEVK</sequence>
<gene>
    <name evidence="1" type="primary">ttcA</name>
    <name type="ordered locus">Ecok1_13010</name>
    <name type="ORF">APECO1_496</name>
</gene>
<dbReference type="EC" id="2.8.1.-" evidence="1"/>
<dbReference type="EMBL" id="CP000468">
    <property type="protein sequence ID" value="ABJ00795.1"/>
    <property type="molecule type" value="Genomic_DNA"/>
</dbReference>
<dbReference type="RefSeq" id="WP_001157379.1">
    <property type="nucleotide sequence ID" value="NZ_CADILS010000001.1"/>
</dbReference>
<dbReference type="SMR" id="A1AAV5"/>
<dbReference type="KEGG" id="ecv:APECO1_496"/>
<dbReference type="HOGENOM" id="CLU_026481_0_0_6"/>
<dbReference type="Proteomes" id="UP000008216">
    <property type="component" value="Chromosome"/>
</dbReference>
<dbReference type="GO" id="GO:0005737">
    <property type="term" value="C:cytoplasm"/>
    <property type="evidence" value="ECO:0007669"/>
    <property type="project" value="UniProtKB-SubCell"/>
</dbReference>
<dbReference type="GO" id="GO:0051539">
    <property type="term" value="F:4 iron, 4 sulfur cluster binding"/>
    <property type="evidence" value="ECO:0007669"/>
    <property type="project" value="UniProtKB-UniRule"/>
</dbReference>
<dbReference type="GO" id="GO:0005524">
    <property type="term" value="F:ATP binding"/>
    <property type="evidence" value="ECO:0007669"/>
    <property type="project" value="UniProtKB-UniRule"/>
</dbReference>
<dbReference type="GO" id="GO:0000287">
    <property type="term" value="F:magnesium ion binding"/>
    <property type="evidence" value="ECO:0007669"/>
    <property type="project" value="UniProtKB-UniRule"/>
</dbReference>
<dbReference type="GO" id="GO:0016783">
    <property type="term" value="F:sulfurtransferase activity"/>
    <property type="evidence" value="ECO:0007669"/>
    <property type="project" value="UniProtKB-UniRule"/>
</dbReference>
<dbReference type="GO" id="GO:0000049">
    <property type="term" value="F:tRNA binding"/>
    <property type="evidence" value="ECO:0007669"/>
    <property type="project" value="UniProtKB-KW"/>
</dbReference>
<dbReference type="GO" id="GO:0034227">
    <property type="term" value="P:tRNA thio-modification"/>
    <property type="evidence" value="ECO:0007669"/>
    <property type="project" value="UniProtKB-UniRule"/>
</dbReference>
<dbReference type="CDD" id="cd24138">
    <property type="entry name" value="TtcA-like"/>
    <property type="match status" value="1"/>
</dbReference>
<dbReference type="FunFam" id="3.40.50.620:FF:000046">
    <property type="entry name" value="tRNA-cytidine(32) 2-sulfurtransferase"/>
    <property type="match status" value="1"/>
</dbReference>
<dbReference type="Gene3D" id="3.40.50.620">
    <property type="entry name" value="HUPs"/>
    <property type="match status" value="1"/>
</dbReference>
<dbReference type="HAMAP" id="MF_01850">
    <property type="entry name" value="TtcA"/>
    <property type="match status" value="1"/>
</dbReference>
<dbReference type="InterPro" id="IPR014729">
    <property type="entry name" value="Rossmann-like_a/b/a_fold"/>
</dbReference>
<dbReference type="InterPro" id="IPR011063">
    <property type="entry name" value="TilS/TtcA_N"/>
</dbReference>
<dbReference type="InterPro" id="IPR012089">
    <property type="entry name" value="tRNA_Cyd_32_2_STrfase"/>
</dbReference>
<dbReference type="InterPro" id="IPR035107">
    <property type="entry name" value="tRNA_thiolation_TtcA_Ctu1"/>
</dbReference>
<dbReference type="NCBIfam" id="NF007972">
    <property type="entry name" value="PRK10696.1"/>
    <property type="match status" value="1"/>
</dbReference>
<dbReference type="PANTHER" id="PTHR43686:SF1">
    <property type="entry name" value="AMINOTRAN_5 DOMAIN-CONTAINING PROTEIN"/>
    <property type="match status" value="1"/>
</dbReference>
<dbReference type="PANTHER" id="PTHR43686">
    <property type="entry name" value="SULFURTRANSFERASE-RELATED"/>
    <property type="match status" value="1"/>
</dbReference>
<dbReference type="Pfam" id="PF01171">
    <property type="entry name" value="ATP_bind_3"/>
    <property type="match status" value="1"/>
</dbReference>
<dbReference type="PIRSF" id="PIRSF004976">
    <property type="entry name" value="ATPase_YdaO"/>
    <property type="match status" value="1"/>
</dbReference>
<dbReference type="SUPFAM" id="SSF52402">
    <property type="entry name" value="Adenine nucleotide alpha hydrolases-like"/>
    <property type="match status" value="1"/>
</dbReference>
<name>TTCA_ECOK1</name>
<organism>
    <name type="scientific">Escherichia coli O1:K1 / APEC</name>
    <dbReference type="NCBI Taxonomy" id="405955"/>
    <lineage>
        <taxon>Bacteria</taxon>
        <taxon>Pseudomonadati</taxon>
        <taxon>Pseudomonadota</taxon>
        <taxon>Gammaproteobacteria</taxon>
        <taxon>Enterobacterales</taxon>
        <taxon>Enterobacteriaceae</taxon>
        <taxon>Escherichia</taxon>
    </lineage>
</organism>
<evidence type="ECO:0000255" key="1">
    <source>
        <dbReference type="HAMAP-Rule" id="MF_01850"/>
    </source>
</evidence>
<feature type="chain" id="PRO_0000348723" description="tRNA-cytidine(32) 2-sulfurtransferase">
    <location>
        <begin position="1"/>
        <end position="311"/>
    </location>
</feature>
<feature type="short sequence motif" description="PP-loop motif" evidence="1">
    <location>
        <begin position="47"/>
        <end position="52"/>
    </location>
</feature>
<feature type="binding site" evidence="1">
    <location>
        <position position="122"/>
    </location>
    <ligand>
        <name>[4Fe-4S] cluster</name>
        <dbReference type="ChEBI" id="CHEBI:49883"/>
    </ligand>
</feature>
<feature type="binding site" evidence="1">
    <location>
        <position position="125"/>
    </location>
    <ligand>
        <name>[4Fe-4S] cluster</name>
        <dbReference type="ChEBI" id="CHEBI:49883"/>
    </ligand>
</feature>
<feature type="binding site" evidence="1">
    <location>
        <position position="213"/>
    </location>
    <ligand>
        <name>[4Fe-4S] cluster</name>
        <dbReference type="ChEBI" id="CHEBI:49883"/>
    </ligand>
</feature>
<reference key="1">
    <citation type="journal article" date="2007" name="J. Bacteriol.">
        <title>The genome sequence of avian pathogenic Escherichia coli strain O1:K1:H7 shares strong similarities with human extraintestinal pathogenic E. coli genomes.</title>
        <authorList>
            <person name="Johnson T.J."/>
            <person name="Kariyawasam S."/>
            <person name="Wannemuehler Y."/>
            <person name="Mangiamele P."/>
            <person name="Johnson S.J."/>
            <person name="Doetkott C."/>
            <person name="Skyberg J.A."/>
            <person name="Lynne A.M."/>
            <person name="Johnson J.R."/>
            <person name="Nolan L.K."/>
        </authorList>
    </citation>
    <scope>NUCLEOTIDE SEQUENCE [LARGE SCALE GENOMIC DNA]</scope>
</reference>